<dbReference type="EC" id="2.1.1.33" evidence="2"/>
<dbReference type="EMBL" id="CP000611">
    <property type="protein sequence ID" value="ABQ71933.1"/>
    <property type="molecule type" value="Genomic_DNA"/>
</dbReference>
<dbReference type="RefSeq" id="WP_003401204.1">
    <property type="nucleotide sequence ID" value="NZ_CP016972.1"/>
</dbReference>
<dbReference type="SMR" id="A5TYT3"/>
<dbReference type="GeneID" id="45424179"/>
<dbReference type="KEGG" id="mra:MRA_0216"/>
<dbReference type="eggNOG" id="COG0220">
    <property type="taxonomic scope" value="Bacteria"/>
</dbReference>
<dbReference type="HOGENOM" id="CLU_050910_0_2_11"/>
<dbReference type="UniPathway" id="UPA00989"/>
<dbReference type="Proteomes" id="UP000001988">
    <property type="component" value="Chromosome"/>
</dbReference>
<dbReference type="GO" id="GO:0043527">
    <property type="term" value="C:tRNA methyltransferase complex"/>
    <property type="evidence" value="ECO:0007669"/>
    <property type="project" value="TreeGrafter"/>
</dbReference>
<dbReference type="GO" id="GO:0008176">
    <property type="term" value="F:tRNA (guanine(46)-N7)-methyltransferase activity"/>
    <property type="evidence" value="ECO:0007669"/>
    <property type="project" value="UniProtKB-UniRule"/>
</dbReference>
<dbReference type="CDD" id="cd02440">
    <property type="entry name" value="AdoMet_MTases"/>
    <property type="match status" value="1"/>
</dbReference>
<dbReference type="FunFam" id="3.40.50.150:FF:000035">
    <property type="entry name" value="tRNA (guanine-N(7)-)-methyltransferase"/>
    <property type="match status" value="1"/>
</dbReference>
<dbReference type="Gene3D" id="3.40.50.150">
    <property type="entry name" value="Vaccinia Virus protein VP39"/>
    <property type="match status" value="1"/>
</dbReference>
<dbReference type="HAMAP" id="MF_01057">
    <property type="entry name" value="tRNA_methyltr_TrmB"/>
    <property type="match status" value="1"/>
</dbReference>
<dbReference type="InterPro" id="IPR029063">
    <property type="entry name" value="SAM-dependent_MTases_sf"/>
</dbReference>
<dbReference type="InterPro" id="IPR003358">
    <property type="entry name" value="tRNA_(Gua-N-7)_MeTrfase_Trmb"/>
</dbReference>
<dbReference type="InterPro" id="IPR055361">
    <property type="entry name" value="tRNA_methyltr_TrmB_bact"/>
</dbReference>
<dbReference type="NCBIfam" id="TIGR00091">
    <property type="entry name" value="tRNA (guanosine(46)-N7)-methyltransferase TrmB"/>
    <property type="match status" value="1"/>
</dbReference>
<dbReference type="PANTHER" id="PTHR23417">
    <property type="entry name" value="3-DEOXY-D-MANNO-OCTULOSONIC-ACID TRANSFERASE/TRNA GUANINE-N 7 - -METHYLTRANSFERASE"/>
    <property type="match status" value="1"/>
</dbReference>
<dbReference type="PANTHER" id="PTHR23417:SF14">
    <property type="entry name" value="PENTACOTRIPEPTIDE-REPEAT REGION OF PRORP DOMAIN-CONTAINING PROTEIN"/>
    <property type="match status" value="1"/>
</dbReference>
<dbReference type="Pfam" id="PF02390">
    <property type="entry name" value="Methyltransf_4"/>
    <property type="match status" value="1"/>
</dbReference>
<dbReference type="SUPFAM" id="SSF53335">
    <property type="entry name" value="S-adenosyl-L-methionine-dependent methyltransferases"/>
    <property type="match status" value="1"/>
</dbReference>
<dbReference type="PROSITE" id="PS51625">
    <property type="entry name" value="SAM_MT_TRMB"/>
    <property type="match status" value="1"/>
</dbReference>
<name>TRMB_MYCTA</name>
<protein>
    <recommendedName>
        <fullName evidence="2">tRNA (guanine-N(7)-)-methyltransferase</fullName>
        <ecNumber evidence="2">2.1.1.33</ecNumber>
    </recommendedName>
    <alternativeName>
        <fullName evidence="2">tRNA (guanine(46)-N(7))-methyltransferase</fullName>
    </alternativeName>
    <alternativeName>
        <fullName evidence="2">tRNA(m7G46)-methyltransferase</fullName>
    </alternativeName>
</protein>
<reference key="1">
    <citation type="journal article" date="2008" name="PLoS ONE">
        <title>Genetic basis of virulence attenuation revealed by comparative genomic analysis of Mycobacterium tuberculosis strain H37Ra versus H37Rv.</title>
        <authorList>
            <person name="Zheng H."/>
            <person name="Lu L."/>
            <person name="Wang B."/>
            <person name="Pu S."/>
            <person name="Zhang X."/>
            <person name="Zhu G."/>
            <person name="Shi W."/>
            <person name="Zhang L."/>
            <person name="Wang H."/>
            <person name="Wang S."/>
            <person name="Zhao G."/>
            <person name="Zhang Y."/>
        </authorList>
    </citation>
    <scope>NUCLEOTIDE SEQUENCE [LARGE SCALE GENOMIC DNA]</scope>
    <source>
        <strain>ATCC 25177 / H37Ra</strain>
    </source>
</reference>
<comment type="function">
    <text evidence="2">Catalyzes the formation of N(7)-methylguanine at position 46 (m7G46) in tRNA.</text>
</comment>
<comment type="catalytic activity">
    <reaction evidence="2">
        <text>guanosine(46) in tRNA + S-adenosyl-L-methionine = N(7)-methylguanosine(46) in tRNA + S-adenosyl-L-homocysteine</text>
        <dbReference type="Rhea" id="RHEA:42708"/>
        <dbReference type="Rhea" id="RHEA-COMP:10188"/>
        <dbReference type="Rhea" id="RHEA-COMP:10189"/>
        <dbReference type="ChEBI" id="CHEBI:57856"/>
        <dbReference type="ChEBI" id="CHEBI:59789"/>
        <dbReference type="ChEBI" id="CHEBI:74269"/>
        <dbReference type="ChEBI" id="CHEBI:74480"/>
        <dbReference type="EC" id="2.1.1.33"/>
    </reaction>
</comment>
<comment type="pathway">
    <text evidence="2">tRNA modification; N(7)-methylguanine-tRNA biosynthesis.</text>
</comment>
<comment type="similarity">
    <text evidence="2">Belongs to the class I-like SAM-binding methyltransferase superfamily. TrmB family.</text>
</comment>
<proteinExistence type="inferred from homology"/>
<keyword id="KW-0489">Methyltransferase</keyword>
<keyword id="KW-1185">Reference proteome</keyword>
<keyword id="KW-0949">S-adenosyl-L-methionine</keyword>
<keyword id="KW-0808">Transferase</keyword>
<keyword id="KW-0819">tRNA processing</keyword>
<evidence type="ECO:0000250" key="1"/>
<evidence type="ECO:0000255" key="2">
    <source>
        <dbReference type="HAMAP-Rule" id="MF_01057"/>
    </source>
</evidence>
<evidence type="ECO:0000256" key="3">
    <source>
        <dbReference type="SAM" id="MobiDB-lite"/>
    </source>
</evidence>
<organism>
    <name type="scientific">Mycobacterium tuberculosis (strain ATCC 25177 / H37Ra)</name>
    <dbReference type="NCBI Taxonomy" id="419947"/>
    <lineage>
        <taxon>Bacteria</taxon>
        <taxon>Bacillati</taxon>
        <taxon>Actinomycetota</taxon>
        <taxon>Actinomycetes</taxon>
        <taxon>Mycobacteriales</taxon>
        <taxon>Mycobacteriaceae</taxon>
        <taxon>Mycobacterium</taxon>
        <taxon>Mycobacterium tuberculosis complex</taxon>
    </lineage>
</organism>
<feature type="chain" id="PRO_1000136357" description="tRNA (guanine-N(7)-)-methyltransferase">
    <location>
        <begin position="1"/>
        <end position="263"/>
    </location>
</feature>
<feature type="region of interest" description="Disordered" evidence="3">
    <location>
        <begin position="1"/>
        <end position="39"/>
    </location>
</feature>
<feature type="active site" evidence="1">
    <location>
        <position position="159"/>
    </location>
</feature>
<feature type="binding site" evidence="2">
    <location>
        <position position="82"/>
    </location>
    <ligand>
        <name>S-adenosyl-L-methionine</name>
        <dbReference type="ChEBI" id="CHEBI:59789"/>
    </ligand>
</feature>
<feature type="binding site" evidence="2">
    <location>
        <position position="107"/>
    </location>
    <ligand>
        <name>S-adenosyl-L-methionine</name>
        <dbReference type="ChEBI" id="CHEBI:59789"/>
    </ligand>
</feature>
<feature type="binding site" evidence="2">
    <location>
        <position position="136"/>
    </location>
    <ligand>
        <name>S-adenosyl-L-methionine</name>
        <dbReference type="ChEBI" id="CHEBI:59789"/>
    </ligand>
</feature>
<feature type="binding site" evidence="2">
    <location>
        <position position="159"/>
    </location>
    <ligand>
        <name>S-adenosyl-L-methionine</name>
        <dbReference type="ChEBI" id="CHEBI:59789"/>
    </ligand>
</feature>
<feature type="binding site" evidence="2">
    <location>
        <position position="163"/>
    </location>
    <ligand>
        <name>substrate</name>
    </ligand>
</feature>
<feature type="binding site" evidence="2">
    <location>
        <position position="195"/>
    </location>
    <ligand>
        <name>substrate</name>
    </ligand>
</feature>
<feature type="binding site" evidence="2">
    <location>
        <begin position="232"/>
        <end position="235"/>
    </location>
    <ligand>
        <name>substrate</name>
    </ligand>
</feature>
<accession>A5TYT3</accession>
<gene>
    <name evidence="2" type="primary">trmB</name>
    <name type="ordered locus">MRA_0216</name>
</gene>
<sequence length="263" mass="28547">MVHHGQMHAQPGVGLRPDTPVASGQLPSTSIRSRRSGISKAQRETWERLWPELGLLALPQSPRGTPVDTRAWFGRDAPVVLEIGSGSGTSTLAMAKAEPHVDVIAVDVYRRGLAQLLCAIDKVGSDGINIRLILGNAVDVLQHLIAPDSLCGVRVFFPDPWPKARHHKRRLLQPATMALIADRLVPSGVLHAATDHPGYAEHIAAAGDAEPRLVRVDPDTELLPISVVRPATKYERKAQLGGGAVIELLWKKHGCSERDLKIR</sequence>